<gene>
    <name evidence="1" type="primary">ligB</name>
    <name type="ordered locus">YpsIP31758_0042</name>
</gene>
<dbReference type="EC" id="6.5.1.2" evidence="1"/>
<dbReference type="EMBL" id="CP000720">
    <property type="protein sequence ID" value="ABS47714.1"/>
    <property type="molecule type" value="Genomic_DNA"/>
</dbReference>
<dbReference type="RefSeq" id="WP_011991012.1">
    <property type="nucleotide sequence ID" value="NC_009708.1"/>
</dbReference>
<dbReference type="SMR" id="A7FCR5"/>
<dbReference type="GeneID" id="49787993"/>
<dbReference type="KEGG" id="ypi:YpsIP31758_0042"/>
<dbReference type="HOGENOM" id="CLU_489786_0_0_6"/>
<dbReference type="Proteomes" id="UP000002412">
    <property type="component" value="Chromosome"/>
</dbReference>
<dbReference type="GO" id="GO:0003911">
    <property type="term" value="F:DNA ligase (NAD+) activity"/>
    <property type="evidence" value="ECO:0007669"/>
    <property type="project" value="UniProtKB-UniRule"/>
</dbReference>
<dbReference type="GO" id="GO:0006281">
    <property type="term" value="P:DNA repair"/>
    <property type="evidence" value="ECO:0007669"/>
    <property type="project" value="UniProtKB-KW"/>
</dbReference>
<dbReference type="GO" id="GO:0006260">
    <property type="term" value="P:DNA replication"/>
    <property type="evidence" value="ECO:0007669"/>
    <property type="project" value="UniProtKB-KW"/>
</dbReference>
<dbReference type="CDD" id="cd00114">
    <property type="entry name" value="LIGANc"/>
    <property type="match status" value="1"/>
</dbReference>
<dbReference type="FunFam" id="2.40.50.140:FF:000139">
    <property type="entry name" value="DNA ligase B"/>
    <property type="match status" value="1"/>
</dbReference>
<dbReference type="FunFam" id="3.30.470.30:FF:000007">
    <property type="entry name" value="DNA ligase B"/>
    <property type="match status" value="1"/>
</dbReference>
<dbReference type="Gene3D" id="1.10.150.20">
    <property type="entry name" value="5' to 3' exonuclease, C-terminal subdomain"/>
    <property type="match status" value="1"/>
</dbReference>
<dbReference type="Gene3D" id="3.30.470.30">
    <property type="entry name" value="DNA ligase/mRNA capping enzyme"/>
    <property type="match status" value="1"/>
</dbReference>
<dbReference type="Gene3D" id="1.10.287.610">
    <property type="entry name" value="Helix hairpin bin"/>
    <property type="match status" value="1"/>
</dbReference>
<dbReference type="Gene3D" id="2.40.50.140">
    <property type="entry name" value="Nucleic acid-binding proteins"/>
    <property type="match status" value="1"/>
</dbReference>
<dbReference type="HAMAP" id="MF_01587">
    <property type="entry name" value="DNA_ligase_B"/>
    <property type="match status" value="1"/>
</dbReference>
<dbReference type="InterPro" id="IPR020923">
    <property type="entry name" value="DNA_ligase_B"/>
</dbReference>
<dbReference type="InterPro" id="IPR013839">
    <property type="entry name" value="DNAligase_adenylation"/>
</dbReference>
<dbReference type="InterPro" id="IPR013840">
    <property type="entry name" value="DNAligase_N"/>
</dbReference>
<dbReference type="InterPro" id="IPR012340">
    <property type="entry name" value="NA-bd_OB-fold"/>
</dbReference>
<dbReference type="InterPro" id="IPR050326">
    <property type="entry name" value="NAD_dep_DNA_ligaseB"/>
</dbReference>
<dbReference type="InterPro" id="IPR004150">
    <property type="entry name" value="NAD_DNA_ligase_OB"/>
</dbReference>
<dbReference type="InterPro" id="IPR010994">
    <property type="entry name" value="RuvA_2-like"/>
</dbReference>
<dbReference type="NCBIfam" id="NF005987">
    <property type="entry name" value="PRK08097.1"/>
    <property type="match status" value="1"/>
</dbReference>
<dbReference type="PANTHER" id="PTHR47810">
    <property type="entry name" value="DNA LIGASE"/>
    <property type="match status" value="1"/>
</dbReference>
<dbReference type="PANTHER" id="PTHR47810:SF1">
    <property type="entry name" value="DNA LIGASE B"/>
    <property type="match status" value="1"/>
</dbReference>
<dbReference type="Pfam" id="PF01653">
    <property type="entry name" value="DNA_ligase_aden"/>
    <property type="match status" value="1"/>
</dbReference>
<dbReference type="Pfam" id="PF03120">
    <property type="entry name" value="DNA_ligase_OB"/>
    <property type="match status" value="1"/>
</dbReference>
<dbReference type="SMART" id="SM00532">
    <property type="entry name" value="LIGANc"/>
    <property type="match status" value="1"/>
</dbReference>
<dbReference type="SUPFAM" id="SSF56091">
    <property type="entry name" value="DNA ligase/mRNA capping enzyme, catalytic domain"/>
    <property type="match status" value="1"/>
</dbReference>
<dbReference type="SUPFAM" id="SSF50249">
    <property type="entry name" value="Nucleic acid-binding proteins"/>
    <property type="match status" value="1"/>
</dbReference>
<dbReference type="SUPFAM" id="SSF47781">
    <property type="entry name" value="RuvA domain 2-like"/>
    <property type="match status" value="1"/>
</dbReference>
<name>LIGB_YERP3</name>
<feature type="chain" id="PRO_1000069319" description="DNA ligase B">
    <location>
        <begin position="1"/>
        <end position="567"/>
    </location>
</feature>
<feature type="active site" description="N6-AMP-lysine intermediate" evidence="1">
    <location>
        <position position="132"/>
    </location>
</feature>
<proteinExistence type="inferred from homology"/>
<accession>A7FCR5</accession>
<comment type="function">
    <text evidence="1">Catalyzes the formation of phosphodiester linkages between 5'-phosphoryl and 3'-hydroxyl groups in double-stranded DNA using NAD as a coenzyme and as the energy source for the reaction.</text>
</comment>
<comment type="catalytic activity">
    <reaction evidence="1">
        <text>NAD(+) + (deoxyribonucleotide)n-3'-hydroxyl + 5'-phospho-(deoxyribonucleotide)m = (deoxyribonucleotide)n+m + AMP + beta-nicotinamide D-nucleotide.</text>
        <dbReference type="EC" id="6.5.1.2"/>
    </reaction>
</comment>
<comment type="similarity">
    <text evidence="1">Belongs to the NAD-dependent DNA ligase family. LigB subfamily.</text>
</comment>
<sequence length="567" mass="63624">MNILNLKIIMFLLISNIIVVGGAWATSTCPDWPATRIAVEINALEQQLNKWSAAYHQQGHSPVTDDIYDQLQDKLRVWQSCRGLPDKTESQPIPGKGQFLHPVAHTGLKKLKDETALTRWMAGRKNLWVQPKVDGVAVTLVYHGGKLVQLLSRGNGVKGQNWTEKAPFISAIPQYIANAPALLTLQGELFLLMDGHQQAKSGGVNARSTVAGALMRKSPSPLLAQVGVFIWAWPDGPTTMKEKVALLQVMGFPFTAKYSEPVMSHLDVVQWRQFWFQAPLPFVTDGVVVRQEEEPAGRYWQATPGQWSMAWKYPPLQHIAEVKDIHFTLGRTGKGTVVLEVLPIKIDDKWIRRVNIGSVTRWKQWDIAPGDHITLALAGHGIPRLDNVVWRVHQRNTITAPNWDKFHQLSCFQRLPHGCEPQFLSRLIWLSGPGGLDIGGIGGGFWQELIHHELINDLVGWLLLTPEQIASIPGIGNARAEKIYQQFQRAKQQPFSRWLLALGFPQVVSVDAQWQVVLRRSLSEWATMAGIGQMRAKQIKHFLDHPDVQALADFLSTQKVVGFELTE</sequence>
<organism>
    <name type="scientific">Yersinia pseudotuberculosis serotype O:1b (strain IP 31758)</name>
    <dbReference type="NCBI Taxonomy" id="349747"/>
    <lineage>
        <taxon>Bacteria</taxon>
        <taxon>Pseudomonadati</taxon>
        <taxon>Pseudomonadota</taxon>
        <taxon>Gammaproteobacteria</taxon>
        <taxon>Enterobacterales</taxon>
        <taxon>Yersiniaceae</taxon>
        <taxon>Yersinia</taxon>
    </lineage>
</organism>
<evidence type="ECO:0000255" key="1">
    <source>
        <dbReference type="HAMAP-Rule" id="MF_01587"/>
    </source>
</evidence>
<keyword id="KW-0227">DNA damage</keyword>
<keyword id="KW-0234">DNA repair</keyword>
<keyword id="KW-0235">DNA replication</keyword>
<keyword id="KW-0436">Ligase</keyword>
<keyword id="KW-0520">NAD</keyword>
<reference key="1">
    <citation type="journal article" date="2007" name="PLoS Genet.">
        <title>The complete genome sequence of Yersinia pseudotuberculosis IP31758, the causative agent of Far East scarlet-like fever.</title>
        <authorList>
            <person name="Eppinger M."/>
            <person name="Rosovitz M.J."/>
            <person name="Fricke W.F."/>
            <person name="Rasko D.A."/>
            <person name="Kokorina G."/>
            <person name="Fayolle C."/>
            <person name="Lindler L.E."/>
            <person name="Carniel E."/>
            <person name="Ravel J."/>
        </authorList>
    </citation>
    <scope>NUCLEOTIDE SEQUENCE [LARGE SCALE GENOMIC DNA]</scope>
    <source>
        <strain>IP 31758</strain>
    </source>
</reference>
<protein>
    <recommendedName>
        <fullName evidence="1">DNA ligase B</fullName>
        <ecNumber evidence="1">6.5.1.2</ecNumber>
    </recommendedName>
    <alternativeName>
        <fullName evidence="1">Polydeoxyribonucleotide synthase [NAD(+)] B</fullName>
    </alternativeName>
</protein>